<sequence>MAATALAARTRQAVWSVWAMQGRGFGSESGDNVRSSAGAVRDAGGAFGKREQAEEERYFRARAKEQLAALKKHHENEISHHAKEIERLQKEIERHKQSIKKLKQSEDDD</sequence>
<evidence type="ECO:0000250" key="1">
    <source>
        <dbReference type="UniProtKB" id="O35143"/>
    </source>
</evidence>
<evidence type="ECO:0000250" key="2">
    <source>
        <dbReference type="UniProtKB" id="Q9UII2"/>
    </source>
</evidence>
<evidence type="ECO:0000256" key="3">
    <source>
        <dbReference type="SAM" id="MobiDB-lite"/>
    </source>
</evidence>
<evidence type="ECO:0000269" key="4">
    <source>
    </source>
</evidence>
<evidence type="ECO:0000269" key="5">
    <source>
    </source>
</evidence>
<evidence type="ECO:0000269" key="6">
    <source>
    </source>
</evidence>
<evidence type="ECO:0000269" key="7">
    <source>
    </source>
</evidence>
<evidence type="ECO:0000269" key="8">
    <source>
    </source>
</evidence>
<evidence type="ECO:0000269" key="9">
    <source>
    </source>
</evidence>
<evidence type="ECO:0000269" key="10">
    <source>
    </source>
</evidence>
<evidence type="ECO:0000269" key="11">
    <source>
    </source>
</evidence>
<evidence type="ECO:0000305" key="12"/>
<evidence type="ECO:0007829" key="13">
    <source>
        <dbReference type="PDB" id="1GMJ"/>
    </source>
</evidence>
<evidence type="ECO:0007829" key="14">
    <source>
        <dbReference type="PDB" id="6YY0"/>
    </source>
</evidence>
<reference key="1">
    <citation type="journal article" date="1987" name="Biochemistry">
        <title>ATP synthase from bovine mitochondria: sequences of imported precursors of oligomycin sensitivity conferral protein, factor 6, and adenosinetriphosphatase inhibitor protein.</title>
        <authorList>
            <person name="Walker J.E."/>
            <person name="Gay N.J."/>
            <person name="Powell S.J."/>
            <person name="Kostina M."/>
            <person name="Dyer M.R."/>
        </authorList>
    </citation>
    <scope>NUCLEOTIDE SEQUENCE [MRNA]</scope>
</reference>
<reference key="2">
    <citation type="submission" date="2006-01" db="EMBL/GenBank/DDBJ databases">
        <authorList>
            <consortium name="NIH - Mammalian Gene Collection (MGC) project"/>
        </authorList>
    </citation>
    <scope>NUCLEOTIDE SEQUENCE [LARGE SCALE MRNA]</scope>
    <source>
        <strain>Hereford</strain>
        <tissue>Testis</tissue>
    </source>
</reference>
<reference key="3">
    <citation type="journal article" date="1981" name="Proc. Natl. Acad. Sci. U.S.A.">
        <title>Amino acid sequence of the protein inhibitor of mitochondrial adenosine triphosphatase.</title>
        <authorList>
            <person name="Frangione B."/>
            <person name="Rosenwasser E."/>
            <person name="Penefsky H.S."/>
            <person name="Pullman M.E."/>
        </authorList>
    </citation>
    <scope>PROTEIN SEQUENCE OF 26-109</scope>
</reference>
<reference key="4">
    <citation type="journal article" date="1980" name="Biochemistry">
        <title>Radiolabeling of natural adenosine triphosphatase inhibitor with phenyl (14C)isothiocyanate and study of its interaction with mitochondrial adenosine triphosphatase. Localization of inhibitor binding sites and stoichiometry of binding.</title>
        <authorList>
            <person name="Klein G."/>
            <person name="Satre M."/>
            <person name="Dianoux A.C."/>
            <person name="Vignais P.V."/>
        </authorList>
    </citation>
    <scope>FUNCTION</scope>
    <scope>SUBCELLULAR LOCATION</scope>
</reference>
<reference key="5">
    <citation type="journal article" date="2000" name="J. Biol. Chem.">
        <title>Modulation of the oligomerization state of the bovine F1-ATPase inhibitor protein, IF1, by pH.</title>
        <authorList>
            <person name="Cabezon E."/>
            <person name="Butler P.J."/>
            <person name="Runswick M.J."/>
            <person name="Walker J.E."/>
        </authorList>
    </citation>
    <scope>FUNCTION</scope>
    <scope>SUBUNIT</scope>
</reference>
<reference key="6">
    <citation type="journal article" date="2008" name="J. Biochem.">
        <title>Glutamic acid in the inhibitory site of mitochondrial ATPase inhibitor, IF(1), participates in pH sensing in both mammals and yeast.</title>
        <authorList>
            <person name="Ando C."/>
            <person name="Ichikawa N."/>
        </authorList>
    </citation>
    <scope>FUNCTION</scope>
    <scope>SUBUNIT</scope>
    <scope>MUTAGENESIS OF GLU-51 AND HIS-74</scope>
</reference>
<reference key="7">
    <citation type="journal article" date="2011" name="J. Mol. Biol.">
        <title>Binding of the inhibitor protein IF(1) to bovine F(1)-ATPase.</title>
        <authorList>
            <person name="Bason J.V."/>
            <person name="Runswick M.J."/>
            <person name="Fearnley I.M."/>
            <person name="Walker J.E."/>
        </authorList>
    </citation>
    <scope>FUNCTION</scope>
    <scope>SUBUNIT</scope>
    <scope>MUTAGENESIS OF ALA-46; PHE-47; LYS-49; ARG-50; GLU-51; GLN-52; ALA-53; GLU-54; GLU-55; GLU-56; ARG-57; TYR-58; PHE-59; ARG-60; ARG-62; LYS-64; GLU-65; GLN-66; LEU-67; ALA-68; ALA-69 AND LEU-70</scope>
</reference>
<reference key="8">
    <citation type="journal article" date="2001" name="EMBO J.">
        <title>The structure of bovine IF(1), the regulatory subunit of mitochondrial F-ATPase.</title>
        <authorList>
            <person name="Cabezon E."/>
            <person name="Runswick M.J."/>
            <person name="Leslie A.G."/>
            <person name="Walker J.E."/>
        </authorList>
    </citation>
    <scope>X-RAY CRYSTALLOGRAPHY (2.2 ANGSTROMS) OF 26-109</scope>
    <scope>SUBUNIT</scope>
</reference>
<reference key="9">
    <citation type="journal article" date="2001" name="J. Mol. Biol.">
        <title>Solution structure of a C-terminal coiled-coil domain from bovine IF(1): the inhibitor protein of F(1) ATPase.</title>
        <authorList>
            <person name="Gordon-Smith D.J."/>
            <person name="Carbajo R.J."/>
            <person name="Yang J.C."/>
            <person name="Videler H."/>
            <person name="Runswick M.J."/>
            <person name="Walker J.E."/>
            <person name="Neuhaus D."/>
        </authorList>
    </citation>
    <scope>STRUCTURE BY NMR OF 69-109</scope>
</reference>
<reference key="10">
    <citation type="journal article" date="2003" name="Nat. Struct. Biol.">
        <title>The structure of bovine F1-ATPase in complex with its regulatory protein IF1.</title>
        <authorList>
            <person name="Cabezon E."/>
            <person name="Montgomery M.G."/>
            <person name="Leslie A.G."/>
            <person name="Walker J.E."/>
        </authorList>
    </citation>
    <scope>X-RAY CRYSTALLOGRAPHY (2.8 ANGSTROMS) OF 26-109 IN COMPLEX WITH ATP5F1A; ATP5F1B AND ATP5F1C</scope>
    <scope>SUBUNIT</scope>
    <scope>FUNCTION</scope>
</reference>
<reference key="11">
    <citation type="journal article" date="2007" name="Proc. Natl. Acad. Sci. U.S.A.">
        <title>How the regulatory protein, IF(1), inhibits F(1)-ATPase from bovine mitochondria.</title>
        <authorList>
            <person name="Gledhill J.R."/>
            <person name="Montgomery M.G."/>
            <person name="Leslie A.G."/>
            <person name="Walker J.E."/>
        </authorList>
    </citation>
    <scope>X-RAY CRYSTALLOGRAPHY (2.1 ANGSTROMS) OF 26-85 IN COMPLEX WITH ATP5F1A; ATP5F1B; ATP5F1C; ATP5F1D AND ATP5F1E</scope>
    <scope>SUBUNIT</scope>
    <scope>FUNCTION</scope>
</reference>
<name>ATIF1_BOVIN</name>
<organism>
    <name type="scientific">Bos taurus</name>
    <name type="common">Bovine</name>
    <dbReference type="NCBI Taxonomy" id="9913"/>
    <lineage>
        <taxon>Eukaryota</taxon>
        <taxon>Metazoa</taxon>
        <taxon>Chordata</taxon>
        <taxon>Craniata</taxon>
        <taxon>Vertebrata</taxon>
        <taxon>Euteleostomi</taxon>
        <taxon>Mammalia</taxon>
        <taxon>Eutheria</taxon>
        <taxon>Laurasiatheria</taxon>
        <taxon>Artiodactyla</taxon>
        <taxon>Ruminantia</taxon>
        <taxon>Pecora</taxon>
        <taxon>Bovidae</taxon>
        <taxon>Bovinae</taxon>
        <taxon>Bos</taxon>
    </lineage>
</organism>
<feature type="transit peptide" description="Mitochondrion" evidence="10">
    <location>
        <begin position="1"/>
        <end position="25"/>
    </location>
</feature>
<feature type="chain" id="PRO_0000002546" description="ATPase inhibitor, mitochondrial">
    <location>
        <begin position="26"/>
        <end position="109"/>
    </location>
</feature>
<feature type="region of interest" description="Disordered" evidence="3">
    <location>
        <begin position="26"/>
        <end position="52"/>
    </location>
</feature>
<feature type="region of interest" description="N-terminal inhibitory region">
    <location>
        <begin position="26"/>
        <end position="52"/>
    </location>
</feature>
<feature type="region of interest" description="Antiparallel alpha-helical coiled coil region">
    <location>
        <begin position="74"/>
        <end position="106"/>
    </location>
</feature>
<feature type="coiled-coil region">
    <location>
        <begin position="69"/>
        <end position="109"/>
    </location>
</feature>
<feature type="site" description="Participates in pH sensing">
    <location>
        <position position="51"/>
    </location>
</feature>
<feature type="site" description="Participates in pH sensing">
    <location>
        <position position="74"/>
    </location>
</feature>
<feature type="modified residue" description="N6-succinyllysine" evidence="1">
    <location>
        <position position="103"/>
    </location>
</feature>
<feature type="mutagenesis site" description="Strongly impairs F(1)F(o)-ATP synthase-binding." evidence="9">
    <original>A</original>
    <variation>V</variation>
    <location>
        <position position="46"/>
    </location>
</feature>
<feature type="mutagenesis site" description="Strongly impairs F(1)F(o)-ATP synthase-binding." evidence="9">
    <original>F</original>
    <variation>A</variation>
    <location>
        <position position="47"/>
    </location>
</feature>
<feature type="mutagenesis site" description="No effect on F(1)F(o)-ATP synthase-binding." evidence="9">
    <original>K</original>
    <variation>A</variation>
    <location>
        <position position="49"/>
    </location>
</feature>
<feature type="mutagenesis site" description="Strongly impairs F(1)F(o)-ATP synthase-binding." evidence="9">
    <original>R</original>
    <variation>A</variation>
    <location>
        <position position="50"/>
    </location>
</feature>
<feature type="mutagenesis site" description="No effect on F(1)F(o)-ATP synthase-binding." evidence="8 9">
    <original>E</original>
    <variation>A</variation>
    <location>
        <position position="51"/>
    </location>
</feature>
<feature type="mutagenesis site" description="Retains its inhibitory activity at pH 8.2 although it still forms a homotetramer at high pH." evidence="8 9">
    <original>E</original>
    <variation>A</variation>
    <location>
        <position position="51"/>
    </location>
</feature>
<feature type="mutagenesis site" description="Impairs F(1)F(o)-ATP synthase-binding." evidence="9">
    <original>Q</original>
    <variation>A</variation>
    <location>
        <position position="52"/>
    </location>
</feature>
<feature type="mutagenesis site" description="Strongly impairs F(1)F(o)-ATP synthase-binding." evidence="9">
    <original>A</original>
    <variation>V</variation>
    <location>
        <position position="53"/>
    </location>
</feature>
<feature type="mutagenesis site" description="No effect on F(1)F(o)-ATP synthase-binding." evidence="9">
    <original>E</original>
    <variation>A</variation>
    <location>
        <position position="54"/>
    </location>
</feature>
<feature type="mutagenesis site" description="Strongly impairs F(1)F(o)-ATP synthase-binding." evidence="9">
    <original>E</original>
    <variation>A</variation>
    <location>
        <position position="55"/>
    </location>
</feature>
<feature type="mutagenesis site" description="No effect on F(1)F(o)-ATP synthase-binding." evidence="9">
    <original>E</original>
    <variation>A</variation>
    <location>
        <position position="56"/>
    </location>
</feature>
<feature type="mutagenesis site" description="No effect on F(1)F(o)-ATP synthase-binding." evidence="9">
    <original>R</original>
    <variation>A</variation>
    <location>
        <position position="57"/>
    </location>
</feature>
<feature type="mutagenesis site" description="Strongly impairs F(1)F(o)-ATP synthase-binding." evidence="9">
    <original>Y</original>
    <variation>A</variation>
    <location>
        <position position="58"/>
    </location>
</feature>
<feature type="mutagenesis site" description="Strongly impairs F(1)F(o)-ATP synthase-binding." evidence="9">
    <original>F</original>
    <variation>A</variation>
    <location>
        <position position="59"/>
    </location>
</feature>
<feature type="mutagenesis site" description="No effect on F(1)F(o)-ATP synthase-binding." evidence="9">
    <original>R</original>
    <variation>A</variation>
    <location>
        <position position="60"/>
    </location>
</feature>
<feature type="mutagenesis site" description="Impairs F(1)F(o)-ATP synthase-binding." evidence="9">
    <original>R</original>
    <variation>A</variation>
    <location>
        <position position="62"/>
    </location>
</feature>
<feature type="mutagenesis site" description="Strongly impairs F(1)F(o)-ATP synthase-binding." evidence="9">
    <original>K</original>
    <variation>A</variation>
    <location>
        <position position="64"/>
    </location>
</feature>
<feature type="mutagenesis site" description="Strongly impairs F(1)F(o)-ATP synthase-binding." evidence="9">
    <original>E</original>
    <variation>A</variation>
    <location>
        <position position="65"/>
    </location>
</feature>
<feature type="mutagenesis site" description="Impairs F(1)F(o)-ATP synthase-binding." evidence="9">
    <original>Q</original>
    <variation>A</variation>
    <location>
        <position position="66"/>
    </location>
</feature>
<feature type="mutagenesis site" description="Impairs F(1)F(o)-ATP synthase-binding." evidence="9">
    <original>L</original>
    <variation>A</variation>
    <location>
        <position position="67"/>
    </location>
</feature>
<feature type="mutagenesis site" description="Strongly impairs F(1)F(o)-ATP synthase-binding." evidence="9">
    <original>A</original>
    <variation>V</variation>
    <location>
        <position position="68"/>
    </location>
</feature>
<feature type="mutagenesis site" description="Strongly impairs F(1)F(o)-ATP synthase-binding." evidence="9">
    <original>A</original>
    <variation>V</variation>
    <location>
        <position position="69"/>
    </location>
</feature>
<feature type="mutagenesis site" description="Strongly impairs F(1)F(o)-ATP synthase-binding." evidence="9">
    <original>L</original>
    <variation>A</variation>
    <location>
        <position position="70"/>
    </location>
</feature>
<feature type="mutagenesis site" description="Retains its inhibitory activity at pH 8.2 and does not form a homotetramer at high pH." evidence="8">
    <original>H</original>
    <variation>K</variation>
    <location>
        <position position="74"/>
    </location>
</feature>
<feature type="sequence conflict" description="In Ref. 3; AA sequence." evidence="12" ref="3">
    <original>E</original>
    <variation>Q</variation>
    <location>
        <position position="55"/>
    </location>
</feature>
<feature type="helix" evidence="14">
    <location>
        <begin position="40"/>
        <end position="43"/>
    </location>
</feature>
<feature type="helix" evidence="13">
    <location>
        <begin position="45"/>
        <end position="107"/>
    </location>
</feature>
<proteinExistence type="evidence at protein level"/>
<gene>
    <name evidence="2" type="primary">ATP5IF1</name>
    <name type="synonym">ATPI</name>
    <name type="synonym">ATPIF1</name>
</gene>
<protein>
    <recommendedName>
        <fullName evidence="12">ATPase inhibitor, mitochondrial</fullName>
    </recommendedName>
    <alternativeName>
        <fullName evidence="2">ATP synthase F1 subunit epsilon</fullName>
    </alternativeName>
    <alternativeName>
        <fullName>Inhibitor of F(1)F(o)-ATPase</fullName>
        <shortName>IF(1)</shortName>
        <shortName>IF1</shortName>
    </alternativeName>
</protein>
<dbReference type="EMBL" id="M22559">
    <property type="protein sequence ID" value="AAA30396.1"/>
    <property type="molecule type" value="mRNA"/>
</dbReference>
<dbReference type="EMBL" id="BC111645">
    <property type="protein sequence ID" value="AAI11646.1"/>
    <property type="molecule type" value="mRNA"/>
</dbReference>
<dbReference type="PIR" id="C27382">
    <property type="entry name" value="IWBO"/>
</dbReference>
<dbReference type="RefSeq" id="NP_787010.1">
    <property type="nucleotide sequence ID" value="NM_175816.3"/>
</dbReference>
<dbReference type="PDB" id="1GMJ">
    <property type="method" value="X-ray"/>
    <property type="resolution" value="2.20 A"/>
    <property type="chains" value="A/B/C/D=26-109"/>
</dbReference>
<dbReference type="PDB" id="1HF9">
    <property type="method" value="NMR"/>
    <property type="chains" value="A/B=69-109"/>
</dbReference>
<dbReference type="PDB" id="1OHH">
    <property type="method" value="X-ray"/>
    <property type="resolution" value="2.80 A"/>
    <property type="chains" value="H=26-109"/>
</dbReference>
<dbReference type="PDB" id="2V7Q">
    <property type="method" value="X-ray"/>
    <property type="resolution" value="2.10 A"/>
    <property type="chains" value="J=26-85"/>
</dbReference>
<dbReference type="PDB" id="4TSF">
    <property type="method" value="X-ray"/>
    <property type="resolution" value="3.20 A"/>
    <property type="chains" value="H/I=26-85"/>
</dbReference>
<dbReference type="PDB" id="4TT3">
    <property type="method" value="X-ray"/>
    <property type="resolution" value="3.21 A"/>
    <property type="chains" value="H/I/J=26-85"/>
</dbReference>
<dbReference type="PDB" id="4Z1M">
    <property type="method" value="X-ray"/>
    <property type="resolution" value="3.30 A"/>
    <property type="chains" value="H/I/J=26-85"/>
</dbReference>
<dbReference type="PDB" id="5LQX">
    <property type="method" value="EM"/>
    <property type="resolution" value="7.90 A"/>
    <property type="chains" value="J=26-85"/>
</dbReference>
<dbReference type="PDB" id="5LQY">
    <property type="method" value="EM"/>
    <property type="resolution" value="7.80 A"/>
    <property type="chains" value="J=26-85"/>
</dbReference>
<dbReference type="PDB" id="5LQZ">
    <property type="method" value="EM"/>
    <property type="resolution" value="7.00 A"/>
    <property type="chains" value="J=26-85"/>
</dbReference>
<dbReference type="PDB" id="6YY0">
    <property type="method" value="EM"/>
    <property type="resolution" value="3.23 A"/>
    <property type="chains" value="J=26-85"/>
</dbReference>
<dbReference type="PDB" id="6Z1R">
    <property type="method" value="EM"/>
    <property type="resolution" value="3.29 A"/>
    <property type="chains" value="J=26-85"/>
</dbReference>
<dbReference type="PDB" id="6Z1U">
    <property type="method" value="EM"/>
    <property type="resolution" value="3.47 A"/>
    <property type="chains" value="J=26-85"/>
</dbReference>
<dbReference type="PDB" id="6ZPO">
    <property type="method" value="EM"/>
    <property type="resolution" value="4.00 A"/>
    <property type="chains" value="J=26-85"/>
</dbReference>
<dbReference type="PDB" id="6ZQM">
    <property type="method" value="EM"/>
    <property type="resolution" value="3.29 A"/>
    <property type="chains" value="J=26-85"/>
</dbReference>
<dbReference type="PDB" id="6ZQN">
    <property type="method" value="EM"/>
    <property type="resolution" value="4.00 A"/>
    <property type="chains" value="J=26-85"/>
</dbReference>
<dbReference type="PDB" id="7AJB">
    <property type="method" value="EM"/>
    <property type="resolution" value="9.20 A"/>
    <property type="chains" value="AJ/J=26-85"/>
</dbReference>
<dbReference type="PDB" id="7AJC">
    <property type="method" value="EM"/>
    <property type="resolution" value="11.90 A"/>
    <property type="chains" value="AJ/J=26-85"/>
</dbReference>
<dbReference type="PDB" id="7AJD">
    <property type="method" value="EM"/>
    <property type="resolution" value="9.00 A"/>
    <property type="chains" value="AJ/J=26-85"/>
</dbReference>
<dbReference type="PDB" id="7AJE">
    <property type="method" value="EM"/>
    <property type="resolution" value="9.40 A"/>
    <property type="chains" value="AJ/J=26-85"/>
</dbReference>
<dbReference type="PDB" id="7AJF">
    <property type="method" value="EM"/>
    <property type="resolution" value="8.45 A"/>
    <property type="chains" value="AJ/J=26-109"/>
</dbReference>
<dbReference type="PDB" id="7AJG">
    <property type="method" value="EM"/>
    <property type="resolution" value="10.70 A"/>
    <property type="chains" value="AJ/J=26-85"/>
</dbReference>
<dbReference type="PDB" id="7AJH">
    <property type="method" value="EM"/>
    <property type="resolution" value="9.70 A"/>
    <property type="chains" value="AJ/J=26-85"/>
</dbReference>
<dbReference type="PDB" id="7AJI">
    <property type="method" value="EM"/>
    <property type="resolution" value="11.40 A"/>
    <property type="chains" value="AJ/J=26-85"/>
</dbReference>
<dbReference type="PDB" id="7AJJ">
    <property type="method" value="EM"/>
    <property type="resolution" value="13.10 A"/>
    <property type="chains" value="AJ/J=26-85"/>
</dbReference>
<dbReference type="PDBsum" id="1GMJ"/>
<dbReference type="PDBsum" id="1HF9"/>
<dbReference type="PDBsum" id="1OHH"/>
<dbReference type="PDBsum" id="2V7Q"/>
<dbReference type="PDBsum" id="4TSF"/>
<dbReference type="PDBsum" id="4TT3"/>
<dbReference type="PDBsum" id="4Z1M"/>
<dbReference type="PDBsum" id="5LQX"/>
<dbReference type="PDBsum" id="5LQY"/>
<dbReference type="PDBsum" id="5LQZ"/>
<dbReference type="PDBsum" id="6YY0"/>
<dbReference type="PDBsum" id="6Z1R"/>
<dbReference type="PDBsum" id="6Z1U"/>
<dbReference type="PDBsum" id="6ZPO"/>
<dbReference type="PDBsum" id="6ZQM"/>
<dbReference type="PDBsum" id="6ZQN"/>
<dbReference type="PDBsum" id="7AJB"/>
<dbReference type="PDBsum" id="7AJC"/>
<dbReference type="PDBsum" id="7AJD"/>
<dbReference type="PDBsum" id="7AJE"/>
<dbReference type="PDBsum" id="7AJF"/>
<dbReference type="PDBsum" id="7AJG"/>
<dbReference type="PDBsum" id="7AJH"/>
<dbReference type="PDBsum" id="7AJI"/>
<dbReference type="PDBsum" id="7AJJ"/>
<dbReference type="BMRB" id="P01096"/>
<dbReference type="EMDB" id="EMD-11001"/>
<dbReference type="EMDB" id="EMD-11039"/>
<dbReference type="EMDB" id="EMD-11040"/>
<dbReference type="EMDB" id="EMD-11342"/>
<dbReference type="EMDB" id="EMD-11368"/>
<dbReference type="EMDB" id="EMD-11369"/>
<dbReference type="EMDB" id="EMD-4100"/>
<dbReference type="EMDB" id="EMD-4101"/>
<dbReference type="EMDB" id="EMD-4102"/>
<dbReference type="SMR" id="P01096"/>
<dbReference type="CORUM" id="P01096"/>
<dbReference type="DIP" id="DIP-46311N"/>
<dbReference type="FunCoup" id="P01096">
    <property type="interactions" value="829"/>
</dbReference>
<dbReference type="IntAct" id="P01096">
    <property type="interactions" value="5"/>
</dbReference>
<dbReference type="STRING" id="9913.ENSBTAP00000008319"/>
<dbReference type="PaxDb" id="9913-ENSBTAP00000008319"/>
<dbReference type="Ensembl" id="ENSBTAT00000008319.5">
    <property type="protein sequence ID" value="ENSBTAP00000008319.3"/>
    <property type="gene ID" value="ENSBTAG00000006342.5"/>
</dbReference>
<dbReference type="GeneID" id="327699"/>
<dbReference type="KEGG" id="bta:327699"/>
<dbReference type="CTD" id="93974"/>
<dbReference type="VEuPathDB" id="HostDB:ENSBTAG00000006342"/>
<dbReference type="VGNC" id="VGNC:103019">
    <property type="gene designation" value="ATP5IF1"/>
</dbReference>
<dbReference type="eggNOG" id="ENOG502S4JP">
    <property type="taxonomic scope" value="Eukaryota"/>
</dbReference>
<dbReference type="GeneTree" id="ENSGT00390000006264"/>
<dbReference type="HOGENOM" id="CLU_147479_0_0_1"/>
<dbReference type="InParanoid" id="P01096"/>
<dbReference type="OMA" id="AFHEEHI"/>
<dbReference type="OrthoDB" id="10045676at2759"/>
<dbReference type="TreeFam" id="TF320659"/>
<dbReference type="EvolutionaryTrace" id="P01096"/>
<dbReference type="Proteomes" id="UP000009136">
    <property type="component" value="Chromosome 2"/>
</dbReference>
<dbReference type="Bgee" id="ENSBTAG00000006342">
    <property type="expression patterns" value="Expressed in tongue muscle and 104 other cell types or tissues"/>
</dbReference>
<dbReference type="GO" id="GO:0009986">
    <property type="term" value="C:cell surface"/>
    <property type="evidence" value="ECO:0000250"/>
    <property type="project" value="UniProtKB"/>
</dbReference>
<dbReference type="GO" id="GO:0005737">
    <property type="term" value="C:cytoplasm"/>
    <property type="evidence" value="ECO:0000318"/>
    <property type="project" value="GO_Central"/>
</dbReference>
<dbReference type="GO" id="GO:0005739">
    <property type="term" value="C:mitochondrion"/>
    <property type="evidence" value="ECO:0000314"/>
    <property type="project" value="UniProtKB"/>
</dbReference>
<dbReference type="GO" id="GO:0032991">
    <property type="term" value="C:protein-containing complex"/>
    <property type="evidence" value="ECO:0000314"/>
    <property type="project" value="UniProtKB"/>
</dbReference>
<dbReference type="GO" id="GO:0043532">
    <property type="term" value="F:angiostatin binding"/>
    <property type="evidence" value="ECO:0000250"/>
    <property type="project" value="UniProtKB"/>
</dbReference>
<dbReference type="GO" id="GO:0051117">
    <property type="term" value="F:ATPase binding"/>
    <property type="evidence" value="ECO:0000314"/>
    <property type="project" value="UniProtKB"/>
</dbReference>
<dbReference type="GO" id="GO:0042030">
    <property type="term" value="F:ATPase inhibitor activity"/>
    <property type="evidence" value="ECO:0000314"/>
    <property type="project" value="UniProtKB"/>
</dbReference>
<dbReference type="GO" id="GO:0005516">
    <property type="term" value="F:calmodulin binding"/>
    <property type="evidence" value="ECO:0000314"/>
    <property type="project" value="UniProtKB"/>
</dbReference>
<dbReference type="GO" id="GO:0042802">
    <property type="term" value="F:identical protein binding"/>
    <property type="evidence" value="ECO:0000353"/>
    <property type="project" value="UniProtKB"/>
</dbReference>
<dbReference type="GO" id="GO:0042803">
    <property type="term" value="F:protein homodimerization activity"/>
    <property type="evidence" value="ECO:0000314"/>
    <property type="project" value="UniProtKB"/>
</dbReference>
<dbReference type="GO" id="GO:0005198">
    <property type="term" value="F:structural molecule activity"/>
    <property type="evidence" value="ECO:0000314"/>
    <property type="project" value="UniProtKB"/>
</dbReference>
<dbReference type="GO" id="GO:0030218">
    <property type="term" value="P:erythrocyte differentiation"/>
    <property type="evidence" value="ECO:0000250"/>
    <property type="project" value="UniProtKB"/>
</dbReference>
<dbReference type="GO" id="GO:0006783">
    <property type="term" value="P:heme biosynthetic process"/>
    <property type="evidence" value="ECO:0000250"/>
    <property type="project" value="UniProtKB"/>
</dbReference>
<dbReference type="GO" id="GO:0001937">
    <property type="term" value="P:negative regulation of endothelial cell proliferation"/>
    <property type="evidence" value="ECO:0000250"/>
    <property type="project" value="UniProtKB"/>
</dbReference>
<dbReference type="GO" id="GO:0051346">
    <property type="term" value="P:negative regulation of hydrolase activity"/>
    <property type="evidence" value="ECO:0000250"/>
    <property type="project" value="UniProtKB"/>
</dbReference>
<dbReference type="GO" id="GO:1905707">
    <property type="term" value="P:negative regulation of mitochondrial ATP synthesis coupled proton transport"/>
    <property type="evidence" value="ECO:0000314"/>
    <property type="project" value="UniProtKB"/>
</dbReference>
<dbReference type="GO" id="GO:0051289">
    <property type="term" value="P:protein homotetramerization"/>
    <property type="evidence" value="ECO:0000314"/>
    <property type="project" value="UniProtKB"/>
</dbReference>
<dbReference type="DisProt" id="DP00844"/>
<dbReference type="FunFam" id="1.20.5.500:FF:000004">
    <property type="entry name" value="ATPase inhibitor A, mitochondrial"/>
    <property type="match status" value="1"/>
</dbReference>
<dbReference type="FunFam" id="1.20.5.500:FF:000003">
    <property type="entry name" value="ATPase inhibitor B, mitochondrial"/>
    <property type="match status" value="1"/>
</dbReference>
<dbReference type="Gene3D" id="1.20.5.500">
    <property type="entry name" value="Single helix bin"/>
    <property type="match status" value="2"/>
</dbReference>
<dbReference type="InterPro" id="IPR007648">
    <property type="entry name" value="ATPase_inhibitor_mt"/>
</dbReference>
<dbReference type="PANTHER" id="PTHR48417">
    <property type="entry name" value="ATP SYNTHASE F1 SUBUNIT EPSILON"/>
    <property type="match status" value="1"/>
</dbReference>
<dbReference type="PANTHER" id="PTHR48417:SF1">
    <property type="entry name" value="ATP SYNTHASE F1 SUBUNIT EPSILON"/>
    <property type="match status" value="1"/>
</dbReference>
<dbReference type="Pfam" id="PF04568">
    <property type="entry name" value="IATP"/>
    <property type="match status" value="1"/>
</dbReference>
<dbReference type="SUPFAM" id="SSF64602">
    <property type="entry name" value="F1 ATPase inhibitor, IF1, C-terminal domain"/>
    <property type="match status" value="1"/>
</dbReference>
<keyword id="KW-0002">3D-structure</keyword>
<keyword id="KW-0175">Coiled coil</keyword>
<keyword id="KW-0903">Direct protein sequencing</keyword>
<keyword id="KW-0496">Mitochondrion</keyword>
<keyword id="KW-1185">Reference proteome</keyword>
<keyword id="KW-0809">Transit peptide</keyword>
<accession>P01096</accession>
<accession>Q2M2T4</accession>
<comment type="function">
    <text evidence="2 4 6 7 8 9 11">Endogenous F(1)F(o)-ATPase inhibitor limiting ATP depletion when the mitochondrial membrane potential falls below a threshold and the F(1)F(o)-ATP synthase starts hydrolyzing ATP to pump protons out of the mitochondrial matrix. Required to avoid the consumption of cellular ATP when the F(1)F(o)-ATP synthase enzyme acts as an ATP hydrolase (PubMed:10831597, PubMed:12923572, PubMed:17895376, PubMed:18687699, PubMed:21192948, PubMed:7397110). Indirectly acts as a regulator of heme synthesis in erythroid tissues: regulates heme synthesis by modulating the mitochondrial pH and redox potential, allowing FECH to efficiently catalyze the incorporation of iron into protoporphyrin IX to produce heme (By similarity).</text>
</comment>
<comment type="subunit">
    <text evidence="4 5 6 7 8 9">Homodimer; represents the active form and is present at a pH value below 6.5. Homotetramer; represents the inactive form and is present at a pH value above 7.0.</text>
</comment>
<comment type="subcellular location">
    <subcellularLocation>
        <location evidence="11">Mitochondrion</location>
    </subcellularLocation>
</comment>
<comment type="domain">
    <text>Forms an alpha-helical dimer with monomers associated via an antiparallel alpha-helical coiled coil composed of residues 74-106, leaving each N-terminal inhibitory region (residues 26-62) accessible for interaction with an F1 catalytic domain. The inhibitory N-terminal region (residues 26-62) binds the alpha(ADP-bound)-beta(ADP-bound) (ATP5F1A-ATP5F1B) interface of F1-ATPase, and also contact the central gamma subunit (ATP5F1C). This dimeric state is favored by pH values below 7.0, and at higher values the dimers associate to form inactive homotetramer, where the inhibitory region is occluded, masking its inhibitory activity (PubMed:11742976, PubMed:12923572, PubMed:17895376).</text>
</comment>
<comment type="similarity">
    <text evidence="12">Belongs to the ATPase inhibitor family.</text>
</comment>